<sequence length="172" mass="19781">MSKEKEVLLNEEIRADEIRCVGDDGKVYGIISSDEALEIANRLGLDLVMIAADAKPPVCKIMDYGKFRYQQEKKQKEAKKKQKVIDIKEIKLSVKIAQNDINYKVKHALEFLEQGKHVRFRVFLKGREMATPEAGVALLEKIWTMIENEANRDKEPNFEGRYVNMLVTPKKA</sequence>
<proteinExistence type="inferred from homology"/>
<comment type="function">
    <text evidence="1">IF-3 binds to the 30S ribosomal subunit and shifts the equilibrium between 70S ribosomes and their 50S and 30S subunits in favor of the free subunits, thus enhancing the availability of 30S subunits on which protein synthesis initiation begins.</text>
</comment>
<comment type="subunit">
    <text evidence="1">Monomer.</text>
</comment>
<comment type="subcellular location">
    <subcellularLocation>
        <location evidence="1">Cytoplasm</location>
    </subcellularLocation>
</comment>
<comment type="similarity">
    <text evidence="1">Belongs to the IF-3 family.</text>
</comment>
<keyword id="KW-0963">Cytoplasm</keyword>
<keyword id="KW-0396">Initiation factor</keyword>
<keyword id="KW-0648">Protein biosynthesis</keyword>
<keyword id="KW-1185">Reference proteome</keyword>
<name>IF3_CAMJE</name>
<evidence type="ECO:0000255" key="1">
    <source>
        <dbReference type="HAMAP-Rule" id="MF_00080"/>
    </source>
</evidence>
<gene>
    <name evidence="1" type="primary">infC</name>
    <name type="ordered locus">Cj0207</name>
</gene>
<reference key="1">
    <citation type="journal article" date="2000" name="Nature">
        <title>The genome sequence of the food-borne pathogen Campylobacter jejuni reveals hypervariable sequences.</title>
        <authorList>
            <person name="Parkhill J."/>
            <person name="Wren B.W."/>
            <person name="Mungall K.L."/>
            <person name="Ketley J.M."/>
            <person name="Churcher C.M."/>
            <person name="Basham D."/>
            <person name="Chillingworth T."/>
            <person name="Davies R.M."/>
            <person name="Feltwell T."/>
            <person name="Holroyd S."/>
            <person name="Jagels K."/>
            <person name="Karlyshev A.V."/>
            <person name="Moule S."/>
            <person name="Pallen M.J."/>
            <person name="Penn C.W."/>
            <person name="Quail M.A."/>
            <person name="Rajandream M.A."/>
            <person name="Rutherford K.M."/>
            <person name="van Vliet A.H.M."/>
            <person name="Whitehead S."/>
            <person name="Barrell B.G."/>
        </authorList>
    </citation>
    <scope>NUCLEOTIDE SEQUENCE [LARGE SCALE GENOMIC DNA]</scope>
    <source>
        <strain>ATCC 700819 / NCTC 11168</strain>
    </source>
</reference>
<feature type="chain" id="PRO_0000177498" description="Translation initiation factor IF-3">
    <location>
        <begin position="1"/>
        <end position="172"/>
    </location>
</feature>
<dbReference type="EMBL" id="AL111168">
    <property type="protein sequence ID" value="CAL34376.1"/>
    <property type="molecule type" value="Genomic_DNA"/>
</dbReference>
<dbReference type="PIR" id="F81439">
    <property type="entry name" value="F81439"/>
</dbReference>
<dbReference type="RefSeq" id="WP_002851726.1">
    <property type="nucleotide sequence ID" value="NZ_SZUC01000006.1"/>
</dbReference>
<dbReference type="RefSeq" id="YP_002343665.1">
    <property type="nucleotide sequence ID" value="NC_002163.1"/>
</dbReference>
<dbReference type="SMR" id="Q9PIS2"/>
<dbReference type="IntAct" id="Q9PIS2">
    <property type="interactions" value="1"/>
</dbReference>
<dbReference type="STRING" id="192222.Cj0207"/>
<dbReference type="PaxDb" id="192222-Cj0207"/>
<dbReference type="DNASU" id="904550"/>
<dbReference type="EnsemblBacteria" id="CAL34376">
    <property type="protein sequence ID" value="CAL34376"/>
    <property type="gene ID" value="Cj0207"/>
</dbReference>
<dbReference type="GeneID" id="904550"/>
<dbReference type="KEGG" id="cje:Cj0207"/>
<dbReference type="PATRIC" id="fig|192222.6.peg.204"/>
<dbReference type="eggNOG" id="COG0290">
    <property type="taxonomic scope" value="Bacteria"/>
</dbReference>
<dbReference type="HOGENOM" id="CLU_054919_3_2_7"/>
<dbReference type="OrthoDB" id="9806014at2"/>
<dbReference type="Proteomes" id="UP000000799">
    <property type="component" value="Chromosome"/>
</dbReference>
<dbReference type="GO" id="GO:0005829">
    <property type="term" value="C:cytosol"/>
    <property type="evidence" value="ECO:0007669"/>
    <property type="project" value="TreeGrafter"/>
</dbReference>
<dbReference type="GO" id="GO:0016020">
    <property type="term" value="C:membrane"/>
    <property type="evidence" value="ECO:0007669"/>
    <property type="project" value="TreeGrafter"/>
</dbReference>
<dbReference type="GO" id="GO:0043022">
    <property type="term" value="F:ribosome binding"/>
    <property type="evidence" value="ECO:0007669"/>
    <property type="project" value="TreeGrafter"/>
</dbReference>
<dbReference type="GO" id="GO:0003743">
    <property type="term" value="F:translation initiation factor activity"/>
    <property type="evidence" value="ECO:0007669"/>
    <property type="project" value="UniProtKB-UniRule"/>
</dbReference>
<dbReference type="GO" id="GO:0032790">
    <property type="term" value="P:ribosome disassembly"/>
    <property type="evidence" value="ECO:0007669"/>
    <property type="project" value="TreeGrafter"/>
</dbReference>
<dbReference type="FunFam" id="3.10.20.80:FF:000001">
    <property type="entry name" value="Translation initiation factor IF-3"/>
    <property type="match status" value="1"/>
</dbReference>
<dbReference type="Gene3D" id="3.30.110.10">
    <property type="entry name" value="Translation initiation factor 3 (IF-3), C-terminal domain"/>
    <property type="match status" value="1"/>
</dbReference>
<dbReference type="Gene3D" id="3.10.20.80">
    <property type="entry name" value="Translation initiation factor 3 (IF-3), N-terminal domain"/>
    <property type="match status" value="1"/>
</dbReference>
<dbReference type="HAMAP" id="MF_00080">
    <property type="entry name" value="IF_3"/>
    <property type="match status" value="1"/>
</dbReference>
<dbReference type="InterPro" id="IPR036788">
    <property type="entry name" value="T_IF-3_C_sf"/>
</dbReference>
<dbReference type="InterPro" id="IPR036787">
    <property type="entry name" value="T_IF-3_N_sf"/>
</dbReference>
<dbReference type="InterPro" id="IPR019813">
    <property type="entry name" value="Translation_initiation_fac3_CS"/>
</dbReference>
<dbReference type="InterPro" id="IPR001288">
    <property type="entry name" value="Translation_initiation_fac_3"/>
</dbReference>
<dbReference type="InterPro" id="IPR019815">
    <property type="entry name" value="Translation_initiation_fac_3_C"/>
</dbReference>
<dbReference type="InterPro" id="IPR019814">
    <property type="entry name" value="Translation_initiation_fac_3_N"/>
</dbReference>
<dbReference type="NCBIfam" id="TIGR00168">
    <property type="entry name" value="infC"/>
    <property type="match status" value="1"/>
</dbReference>
<dbReference type="PANTHER" id="PTHR10938">
    <property type="entry name" value="TRANSLATION INITIATION FACTOR IF-3"/>
    <property type="match status" value="1"/>
</dbReference>
<dbReference type="PANTHER" id="PTHR10938:SF0">
    <property type="entry name" value="TRANSLATION INITIATION FACTOR IF-3, MITOCHONDRIAL"/>
    <property type="match status" value="1"/>
</dbReference>
<dbReference type="Pfam" id="PF00707">
    <property type="entry name" value="IF3_C"/>
    <property type="match status" value="1"/>
</dbReference>
<dbReference type="Pfam" id="PF05198">
    <property type="entry name" value="IF3_N"/>
    <property type="match status" value="1"/>
</dbReference>
<dbReference type="SUPFAM" id="SSF55200">
    <property type="entry name" value="Translation initiation factor IF3, C-terminal domain"/>
    <property type="match status" value="1"/>
</dbReference>
<dbReference type="SUPFAM" id="SSF54364">
    <property type="entry name" value="Translation initiation factor IF3, N-terminal domain"/>
    <property type="match status" value="1"/>
</dbReference>
<dbReference type="PROSITE" id="PS00938">
    <property type="entry name" value="IF3"/>
    <property type="match status" value="1"/>
</dbReference>
<accession>Q9PIS2</accession>
<accession>Q0PBT2</accession>
<protein>
    <recommendedName>
        <fullName evidence="1">Translation initiation factor IF-3</fullName>
    </recommendedName>
</protein>
<organism>
    <name type="scientific">Campylobacter jejuni subsp. jejuni serotype O:2 (strain ATCC 700819 / NCTC 11168)</name>
    <dbReference type="NCBI Taxonomy" id="192222"/>
    <lineage>
        <taxon>Bacteria</taxon>
        <taxon>Pseudomonadati</taxon>
        <taxon>Campylobacterota</taxon>
        <taxon>Epsilonproteobacteria</taxon>
        <taxon>Campylobacterales</taxon>
        <taxon>Campylobacteraceae</taxon>
        <taxon>Campylobacter</taxon>
    </lineage>
</organism>